<protein>
    <recommendedName>
        <fullName evidence="1">UDP-N-acetylmuramoylalanine--D-glutamate ligase</fullName>
        <ecNumber evidence="1">6.3.2.9</ecNumber>
    </recommendedName>
    <alternativeName>
        <fullName evidence="1">D-glutamic acid-adding enzyme</fullName>
    </alternativeName>
    <alternativeName>
        <fullName evidence="1">UDP-N-acetylmuramoyl-L-alanyl-D-glutamate synthetase</fullName>
    </alternativeName>
</protein>
<comment type="function">
    <text evidence="1">Cell wall formation. Catalyzes the addition of glutamate to the nucleotide precursor UDP-N-acetylmuramoyl-L-alanine (UMA).</text>
</comment>
<comment type="catalytic activity">
    <reaction evidence="1">
        <text>UDP-N-acetyl-alpha-D-muramoyl-L-alanine + D-glutamate + ATP = UDP-N-acetyl-alpha-D-muramoyl-L-alanyl-D-glutamate + ADP + phosphate + H(+)</text>
        <dbReference type="Rhea" id="RHEA:16429"/>
        <dbReference type="ChEBI" id="CHEBI:15378"/>
        <dbReference type="ChEBI" id="CHEBI:29986"/>
        <dbReference type="ChEBI" id="CHEBI:30616"/>
        <dbReference type="ChEBI" id="CHEBI:43474"/>
        <dbReference type="ChEBI" id="CHEBI:83898"/>
        <dbReference type="ChEBI" id="CHEBI:83900"/>
        <dbReference type="ChEBI" id="CHEBI:456216"/>
        <dbReference type="EC" id="6.3.2.9"/>
    </reaction>
</comment>
<comment type="pathway">
    <text evidence="1">Cell wall biogenesis; peptidoglycan biosynthesis.</text>
</comment>
<comment type="subcellular location">
    <subcellularLocation>
        <location evidence="1">Cytoplasm</location>
    </subcellularLocation>
</comment>
<comment type="similarity">
    <text evidence="1">Belongs to the MurCDEF family.</text>
</comment>
<sequence>MELKGKKVLVAGLGVSGIALCKVLDSLKAKVIAYDEKEYDVLKENLEEIKSLSIDFRFGKFKKEFLEGVDLVVLSPGVPTDSDIVKTAQEKKIELLGEVEFAYRFSKAPIYAITGTNGKTTTTSLLGEMFKNTGRKVYVAGNIGYPLIYAVMEAAEGDFIVAEISSFQLETIKEFKPKISCIINITPDHLDRHKTFENYRDIKGRIFENQREDEYTVLNYDDPVTWSLKNKAKCRVFPFSRKSLLENGAYIKDGSIYISVNGNAEKIIDIEEIYIPGEHNLENALAASSVAYLSGISADVIANTLKTFKGVEHRIEFVDEINGVKFYNDSKGTNPDASIKAIQALKTPIVLIAGGYDKGSEFDEFVKAFNGKVKKLILIGQTAKKIRDTARKYSYPEDDILFAGTLEEAVKKAYESAKEGDSVLLSPACASWDMFRNFEERGRIFKKAVAELRR</sequence>
<name>MURD_THEP3</name>
<proteinExistence type="inferred from homology"/>
<gene>
    <name evidence="1" type="primary">murD</name>
    <name type="ordered locus">Teth39_0811</name>
</gene>
<dbReference type="EC" id="6.3.2.9" evidence="1"/>
<dbReference type="EMBL" id="CP000924">
    <property type="protein sequence ID" value="ABY94468.1"/>
    <property type="molecule type" value="Genomic_DNA"/>
</dbReference>
<dbReference type="RefSeq" id="WP_012269185.1">
    <property type="nucleotide sequence ID" value="NC_010321.1"/>
</dbReference>
<dbReference type="SMR" id="B0K8K5"/>
<dbReference type="STRING" id="340099.Teth39_0811"/>
<dbReference type="KEGG" id="tpd:Teth39_0811"/>
<dbReference type="eggNOG" id="COG0771">
    <property type="taxonomic scope" value="Bacteria"/>
</dbReference>
<dbReference type="HOGENOM" id="CLU_032540_0_0_9"/>
<dbReference type="UniPathway" id="UPA00219"/>
<dbReference type="Proteomes" id="UP000002156">
    <property type="component" value="Chromosome"/>
</dbReference>
<dbReference type="GO" id="GO:0005737">
    <property type="term" value="C:cytoplasm"/>
    <property type="evidence" value="ECO:0007669"/>
    <property type="project" value="UniProtKB-SubCell"/>
</dbReference>
<dbReference type="GO" id="GO:0005524">
    <property type="term" value="F:ATP binding"/>
    <property type="evidence" value="ECO:0007669"/>
    <property type="project" value="UniProtKB-UniRule"/>
</dbReference>
<dbReference type="GO" id="GO:0008764">
    <property type="term" value="F:UDP-N-acetylmuramoylalanine-D-glutamate ligase activity"/>
    <property type="evidence" value="ECO:0007669"/>
    <property type="project" value="UniProtKB-UniRule"/>
</dbReference>
<dbReference type="GO" id="GO:0051301">
    <property type="term" value="P:cell division"/>
    <property type="evidence" value="ECO:0007669"/>
    <property type="project" value="UniProtKB-KW"/>
</dbReference>
<dbReference type="GO" id="GO:0071555">
    <property type="term" value="P:cell wall organization"/>
    <property type="evidence" value="ECO:0007669"/>
    <property type="project" value="UniProtKB-KW"/>
</dbReference>
<dbReference type="GO" id="GO:0009252">
    <property type="term" value="P:peptidoglycan biosynthetic process"/>
    <property type="evidence" value="ECO:0007669"/>
    <property type="project" value="UniProtKB-UniRule"/>
</dbReference>
<dbReference type="GO" id="GO:0008360">
    <property type="term" value="P:regulation of cell shape"/>
    <property type="evidence" value="ECO:0007669"/>
    <property type="project" value="UniProtKB-KW"/>
</dbReference>
<dbReference type="Gene3D" id="3.90.190.20">
    <property type="entry name" value="Mur ligase, C-terminal domain"/>
    <property type="match status" value="1"/>
</dbReference>
<dbReference type="Gene3D" id="3.40.1190.10">
    <property type="entry name" value="Mur-like, catalytic domain"/>
    <property type="match status" value="1"/>
</dbReference>
<dbReference type="Gene3D" id="3.40.50.720">
    <property type="entry name" value="NAD(P)-binding Rossmann-like Domain"/>
    <property type="match status" value="1"/>
</dbReference>
<dbReference type="HAMAP" id="MF_00639">
    <property type="entry name" value="MurD"/>
    <property type="match status" value="1"/>
</dbReference>
<dbReference type="InterPro" id="IPR036565">
    <property type="entry name" value="Mur-like_cat_sf"/>
</dbReference>
<dbReference type="InterPro" id="IPR004101">
    <property type="entry name" value="Mur_ligase_C"/>
</dbReference>
<dbReference type="InterPro" id="IPR036615">
    <property type="entry name" value="Mur_ligase_C_dom_sf"/>
</dbReference>
<dbReference type="InterPro" id="IPR013221">
    <property type="entry name" value="Mur_ligase_cen"/>
</dbReference>
<dbReference type="InterPro" id="IPR005762">
    <property type="entry name" value="MurD"/>
</dbReference>
<dbReference type="NCBIfam" id="TIGR01087">
    <property type="entry name" value="murD"/>
    <property type="match status" value="1"/>
</dbReference>
<dbReference type="PANTHER" id="PTHR43692">
    <property type="entry name" value="UDP-N-ACETYLMURAMOYLALANINE--D-GLUTAMATE LIGASE"/>
    <property type="match status" value="1"/>
</dbReference>
<dbReference type="PANTHER" id="PTHR43692:SF1">
    <property type="entry name" value="UDP-N-ACETYLMURAMOYLALANINE--D-GLUTAMATE LIGASE"/>
    <property type="match status" value="1"/>
</dbReference>
<dbReference type="Pfam" id="PF02875">
    <property type="entry name" value="Mur_ligase_C"/>
    <property type="match status" value="1"/>
</dbReference>
<dbReference type="Pfam" id="PF08245">
    <property type="entry name" value="Mur_ligase_M"/>
    <property type="match status" value="1"/>
</dbReference>
<dbReference type="Pfam" id="PF21799">
    <property type="entry name" value="MurD-like_N"/>
    <property type="match status" value="1"/>
</dbReference>
<dbReference type="SUPFAM" id="SSF51984">
    <property type="entry name" value="MurCD N-terminal domain"/>
    <property type="match status" value="1"/>
</dbReference>
<dbReference type="SUPFAM" id="SSF53623">
    <property type="entry name" value="MurD-like peptide ligases, catalytic domain"/>
    <property type="match status" value="1"/>
</dbReference>
<dbReference type="SUPFAM" id="SSF53244">
    <property type="entry name" value="MurD-like peptide ligases, peptide-binding domain"/>
    <property type="match status" value="1"/>
</dbReference>
<keyword id="KW-0067">ATP-binding</keyword>
<keyword id="KW-0131">Cell cycle</keyword>
<keyword id="KW-0132">Cell division</keyword>
<keyword id="KW-0133">Cell shape</keyword>
<keyword id="KW-0961">Cell wall biogenesis/degradation</keyword>
<keyword id="KW-0963">Cytoplasm</keyword>
<keyword id="KW-0436">Ligase</keyword>
<keyword id="KW-0547">Nucleotide-binding</keyword>
<keyword id="KW-0573">Peptidoglycan synthesis</keyword>
<keyword id="KW-1185">Reference proteome</keyword>
<organism>
    <name type="scientific">Thermoanaerobacter pseudethanolicus (strain ATCC 33223 / 39E)</name>
    <name type="common">Clostridium thermohydrosulfuricum</name>
    <dbReference type="NCBI Taxonomy" id="340099"/>
    <lineage>
        <taxon>Bacteria</taxon>
        <taxon>Bacillati</taxon>
        <taxon>Bacillota</taxon>
        <taxon>Clostridia</taxon>
        <taxon>Thermoanaerobacterales</taxon>
        <taxon>Thermoanaerobacteraceae</taxon>
        <taxon>Thermoanaerobacter</taxon>
    </lineage>
</organism>
<accession>B0K8K5</accession>
<evidence type="ECO:0000255" key="1">
    <source>
        <dbReference type="HAMAP-Rule" id="MF_00639"/>
    </source>
</evidence>
<feature type="chain" id="PRO_1000130879" description="UDP-N-acetylmuramoylalanine--D-glutamate ligase">
    <location>
        <begin position="1"/>
        <end position="454"/>
    </location>
</feature>
<feature type="binding site" evidence="1">
    <location>
        <begin position="115"/>
        <end position="121"/>
    </location>
    <ligand>
        <name>ATP</name>
        <dbReference type="ChEBI" id="CHEBI:30616"/>
    </ligand>
</feature>
<reference key="1">
    <citation type="submission" date="2008-01" db="EMBL/GenBank/DDBJ databases">
        <title>Complete sequence of Thermoanaerobacter pseudethanolicus 39E.</title>
        <authorList>
            <person name="Copeland A."/>
            <person name="Lucas S."/>
            <person name="Lapidus A."/>
            <person name="Barry K."/>
            <person name="Glavina del Rio T."/>
            <person name="Dalin E."/>
            <person name="Tice H."/>
            <person name="Pitluck S."/>
            <person name="Bruce D."/>
            <person name="Goodwin L."/>
            <person name="Saunders E."/>
            <person name="Brettin T."/>
            <person name="Detter J.C."/>
            <person name="Han C."/>
            <person name="Schmutz J."/>
            <person name="Larimer F."/>
            <person name="Land M."/>
            <person name="Hauser L."/>
            <person name="Kyrpides N."/>
            <person name="Lykidis A."/>
            <person name="Hemme C."/>
            <person name="Fields M.W."/>
            <person name="He Z."/>
            <person name="Zhou J."/>
            <person name="Richardson P."/>
        </authorList>
    </citation>
    <scope>NUCLEOTIDE SEQUENCE [LARGE SCALE GENOMIC DNA]</scope>
    <source>
        <strain>ATCC 33223 / DSM 2355 / 39E</strain>
    </source>
</reference>